<sequence>MNVSKILVSPTVTTNVLRIFAPRLPQIGASLLVQKKWALRSKKFYRFYSEKNSGEMPPKKEADSSGKASNKSTISSIDNSQPPPPSNTNDKTKQANVAVSHAMLATREQEANKDLTSPDAQAAFYKLLLQSNYPQYVVSRFETPGIASSPECMELYMEALQRIGRHSEADAVRQNLLTASSAGAVNPSLASSSSNQSGYHGNFPSMYSPLYGSRKEPLHVVVSESTFTVVSRWVKWLLVFGILTYSFSEGFKYITENTTLLKSSEVADKSVDVAKTNVKFDDVCGCDEARAELEEIVDFLKDPTKYESLGGKLPKGVLLTGPPGTGKTLLARATAGEAGVDFFFMSGSEFDEVYVGVGAKRIRDLFAQARSRAPAIIFIDELDAIGGKRNPKDQAYAKQTLNQLLVELDGFSQTSGIIIIGATNFPEALDKALTRPGRFDKVVNVDLPDVRGRADILKHHMKKITLADNVDPTIIARGTPGLSGAELANLVNQAAVYACQKNAVSVDMSHFEWAKDKILMGAERKTMVLTDAARKATAFHEAGHAIMAKYTNGATPLYKATILPRGRALGITFQLPEMDKVDITKRECQARLDVCMGGKIAEELIYGKDNTTSGCGSDLQSATGTARAMVTQYGMSDDVGPVNLSENWESWSNKIRDIADNEVIELLKDSEERARRLLTKKNVELHRLAQGLIEYETLDAHEIEQVCKGEKLDKLKTSTNTVVEGPDSDERKDIGDDKPKIPTMLNA</sequence>
<organism>
    <name type="scientific">Saccharomyces cerevisiae (strain ATCC 204508 / S288c)</name>
    <name type="common">Baker's yeast</name>
    <dbReference type="NCBI Taxonomy" id="559292"/>
    <lineage>
        <taxon>Eukaryota</taxon>
        <taxon>Fungi</taxon>
        <taxon>Dikarya</taxon>
        <taxon>Ascomycota</taxon>
        <taxon>Saccharomycotina</taxon>
        <taxon>Saccharomycetes</taxon>
        <taxon>Saccharomycetales</taxon>
        <taxon>Saccharomycetaceae</taxon>
        <taxon>Saccharomyces</taxon>
    </lineage>
</organism>
<keyword id="KW-0002">3D-structure</keyword>
<keyword id="KW-0067">ATP-binding</keyword>
<keyword id="KW-0378">Hydrolase</keyword>
<keyword id="KW-0472">Membrane</keyword>
<keyword id="KW-0479">Metal-binding</keyword>
<keyword id="KW-0482">Metalloprotease</keyword>
<keyword id="KW-0496">Mitochondrion</keyword>
<keyword id="KW-0999">Mitochondrion inner membrane</keyword>
<keyword id="KW-0547">Nucleotide-binding</keyword>
<keyword id="KW-0645">Protease</keyword>
<keyword id="KW-1185">Reference proteome</keyword>
<keyword id="KW-0862">Zinc</keyword>
<dbReference type="EC" id="3.4.24.-"/>
<dbReference type="EMBL" id="L14616">
    <property type="protein sequence ID" value="AAA02883.1"/>
    <property type="molecule type" value="Genomic_DNA"/>
</dbReference>
<dbReference type="EMBL" id="X81067">
    <property type="protein sequence ID" value="CAA56954.1"/>
    <property type="molecule type" value="Genomic_DNA"/>
</dbReference>
<dbReference type="EMBL" id="D16332">
    <property type="protein sequence ID" value="BAA03839.1"/>
    <property type="molecule type" value="Genomic_DNA"/>
</dbReference>
<dbReference type="EMBL" id="Z49274">
    <property type="protein sequence ID" value="CAA89278.1"/>
    <property type="molecule type" value="Genomic_DNA"/>
</dbReference>
<dbReference type="EMBL" id="Z71255">
    <property type="protein sequence ID" value="CAA95020.1"/>
    <property type="molecule type" value="Genomic_DNA"/>
</dbReference>
<dbReference type="EMBL" id="BK006949">
    <property type="protein sequence ID" value="DAA11450.1"/>
    <property type="molecule type" value="Genomic_DNA"/>
</dbReference>
<dbReference type="PIR" id="S54498">
    <property type="entry name" value="S46608"/>
</dbReference>
<dbReference type="RefSeq" id="NP_015349.1">
    <property type="nucleotide sequence ID" value="NM_001184121.1"/>
</dbReference>
<dbReference type="PDB" id="2MV3">
    <property type="method" value="NMR"/>
    <property type="chains" value="A=97-176"/>
</dbReference>
<dbReference type="PDBsum" id="2MV3"/>
<dbReference type="SMR" id="P32795"/>
<dbReference type="BioGRID" id="36201">
    <property type="interactions" value="779"/>
</dbReference>
<dbReference type="ComplexPortal" id="CPX-1655">
    <property type="entry name" value="i-AAA complex"/>
</dbReference>
<dbReference type="FunCoup" id="P32795">
    <property type="interactions" value="1269"/>
</dbReference>
<dbReference type="IntAct" id="P32795">
    <property type="interactions" value="13"/>
</dbReference>
<dbReference type="STRING" id="4932.YPR024W"/>
<dbReference type="MEROPS" id="M41.004"/>
<dbReference type="TCDB" id="3.A.29.1.1">
    <property type="family name" value="the mitochondrial inner membrane i-aaa protease complex (mimp) family"/>
</dbReference>
<dbReference type="iPTMnet" id="P32795"/>
<dbReference type="PaxDb" id="4932-YPR024W"/>
<dbReference type="PeptideAtlas" id="P32795"/>
<dbReference type="EnsemblFungi" id="YPR024W_mRNA">
    <property type="protein sequence ID" value="YPR024W"/>
    <property type="gene ID" value="YPR024W"/>
</dbReference>
<dbReference type="GeneID" id="856135"/>
<dbReference type="KEGG" id="sce:YPR024W"/>
<dbReference type="AGR" id="SGD:S000006228"/>
<dbReference type="SGD" id="S000006228">
    <property type="gene designation" value="YME1"/>
</dbReference>
<dbReference type="VEuPathDB" id="FungiDB:YPR024W"/>
<dbReference type="eggNOG" id="KOG0734">
    <property type="taxonomic scope" value="Eukaryota"/>
</dbReference>
<dbReference type="GeneTree" id="ENSGT00550000074836"/>
<dbReference type="HOGENOM" id="CLU_000688_9_3_1"/>
<dbReference type="InParanoid" id="P32795"/>
<dbReference type="OMA" id="MSHFEWA"/>
<dbReference type="OrthoDB" id="1413014at2759"/>
<dbReference type="BioCyc" id="YEAST:G3O-34184-MONOMER"/>
<dbReference type="BRENDA" id="3.4.24.B19">
    <property type="organism ID" value="984"/>
</dbReference>
<dbReference type="Reactome" id="R-SCE-9840373">
    <property type="pathway name" value="Cellular response to mitochondrial stress"/>
</dbReference>
<dbReference type="BioGRID-ORCS" id="856135">
    <property type="hits" value="5 hits in 10 CRISPR screens"/>
</dbReference>
<dbReference type="EvolutionaryTrace" id="P32795"/>
<dbReference type="PRO" id="PR:P32795"/>
<dbReference type="Proteomes" id="UP000002311">
    <property type="component" value="Chromosome XVI"/>
</dbReference>
<dbReference type="RNAct" id="P32795">
    <property type="molecule type" value="protein"/>
</dbReference>
<dbReference type="GO" id="GO:0031942">
    <property type="term" value="C:i-AAA complex"/>
    <property type="evidence" value="ECO:0000314"/>
    <property type="project" value="SGD"/>
</dbReference>
<dbReference type="GO" id="GO:0005743">
    <property type="term" value="C:mitochondrial inner membrane"/>
    <property type="evidence" value="ECO:0000314"/>
    <property type="project" value="SGD"/>
</dbReference>
<dbReference type="GO" id="GO:0005739">
    <property type="term" value="C:mitochondrion"/>
    <property type="evidence" value="ECO:0007005"/>
    <property type="project" value="SGD"/>
</dbReference>
<dbReference type="GO" id="GO:0005524">
    <property type="term" value="F:ATP binding"/>
    <property type="evidence" value="ECO:0007669"/>
    <property type="project" value="UniProtKB-KW"/>
</dbReference>
<dbReference type="GO" id="GO:0016887">
    <property type="term" value="F:ATP hydrolysis activity"/>
    <property type="evidence" value="ECO:0007669"/>
    <property type="project" value="InterPro"/>
</dbReference>
<dbReference type="GO" id="GO:0004176">
    <property type="term" value="F:ATP-dependent peptidase activity"/>
    <property type="evidence" value="ECO:0000315"/>
    <property type="project" value="SGD"/>
</dbReference>
<dbReference type="GO" id="GO:0046872">
    <property type="term" value="F:metal ion binding"/>
    <property type="evidence" value="ECO:0007669"/>
    <property type="project" value="UniProtKB-KW"/>
</dbReference>
<dbReference type="GO" id="GO:0004222">
    <property type="term" value="F:metalloendopeptidase activity"/>
    <property type="evidence" value="ECO:0007669"/>
    <property type="project" value="InterPro"/>
</dbReference>
<dbReference type="GO" id="GO:0033619">
    <property type="term" value="P:membrane protein proteolysis"/>
    <property type="evidence" value="ECO:0000314"/>
    <property type="project" value="SGD"/>
</dbReference>
<dbReference type="GO" id="GO:0141164">
    <property type="term" value="P:mitochondrial protein quality control"/>
    <property type="evidence" value="ECO:0000315"/>
    <property type="project" value="SGD"/>
</dbReference>
<dbReference type="GO" id="GO:0007005">
    <property type="term" value="P:mitochondrion organization"/>
    <property type="evidence" value="ECO:0000318"/>
    <property type="project" value="GO_Central"/>
</dbReference>
<dbReference type="GO" id="GO:0030163">
    <property type="term" value="P:protein catabolic process"/>
    <property type="evidence" value="ECO:0000315"/>
    <property type="project" value="ComplexPortal"/>
</dbReference>
<dbReference type="GO" id="GO:0006457">
    <property type="term" value="P:protein folding"/>
    <property type="evidence" value="ECO:0000315"/>
    <property type="project" value="SGD"/>
</dbReference>
<dbReference type="GO" id="GO:0045041">
    <property type="term" value="P:protein import into mitochondrial intermembrane space"/>
    <property type="evidence" value="ECO:0000314"/>
    <property type="project" value="SGD"/>
</dbReference>
<dbReference type="GO" id="GO:0030150">
    <property type="term" value="P:protein import into mitochondrial matrix"/>
    <property type="evidence" value="ECO:0000315"/>
    <property type="project" value="SGD"/>
</dbReference>
<dbReference type="GO" id="GO:0051604">
    <property type="term" value="P:protein maturation"/>
    <property type="evidence" value="ECO:0000315"/>
    <property type="project" value="SGD"/>
</dbReference>
<dbReference type="GO" id="GO:0006515">
    <property type="term" value="P:protein quality control for misfolded or incompletely synthesized proteins"/>
    <property type="evidence" value="ECO:0000318"/>
    <property type="project" value="GO_Central"/>
</dbReference>
<dbReference type="CDD" id="cd19501">
    <property type="entry name" value="RecA-like_FtsH"/>
    <property type="match status" value="1"/>
</dbReference>
<dbReference type="FunFam" id="1.10.8.60:FF:000001">
    <property type="entry name" value="ATP-dependent zinc metalloprotease FtsH"/>
    <property type="match status" value="1"/>
</dbReference>
<dbReference type="FunFam" id="1.20.58.760:FF:000002">
    <property type="entry name" value="ATP-dependent zinc metalloprotease FtsH"/>
    <property type="match status" value="1"/>
</dbReference>
<dbReference type="FunFam" id="3.40.50.300:FF:000175">
    <property type="entry name" value="ATP-dependent zinc metalloprotease FTSH 4"/>
    <property type="match status" value="1"/>
</dbReference>
<dbReference type="Gene3D" id="1.10.8.60">
    <property type="match status" value="1"/>
</dbReference>
<dbReference type="Gene3D" id="3.40.50.300">
    <property type="entry name" value="P-loop containing nucleotide triphosphate hydrolases"/>
    <property type="match status" value="1"/>
</dbReference>
<dbReference type="Gene3D" id="1.20.58.760">
    <property type="entry name" value="Peptidase M41"/>
    <property type="match status" value="1"/>
</dbReference>
<dbReference type="HAMAP" id="MF_01458">
    <property type="entry name" value="FtsH"/>
    <property type="match status" value="1"/>
</dbReference>
<dbReference type="InterPro" id="IPR003593">
    <property type="entry name" value="AAA+_ATPase"/>
</dbReference>
<dbReference type="InterPro" id="IPR041569">
    <property type="entry name" value="AAA_lid_3"/>
</dbReference>
<dbReference type="InterPro" id="IPR003959">
    <property type="entry name" value="ATPase_AAA_core"/>
</dbReference>
<dbReference type="InterPro" id="IPR003960">
    <property type="entry name" value="ATPase_AAA_CS"/>
</dbReference>
<dbReference type="InterPro" id="IPR005936">
    <property type="entry name" value="FtsH"/>
</dbReference>
<dbReference type="InterPro" id="IPR027417">
    <property type="entry name" value="P-loop_NTPase"/>
</dbReference>
<dbReference type="InterPro" id="IPR000642">
    <property type="entry name" value="Peptidase_M41"/>
</dbReference>
<dbReference type="InterPro" id="IPR037219">
    <property type="entry name" value="Peptidase_M41-like"/>
</dbReference>
<dbReference type="InterPro" id="IPR048438">
    <property type="entry name" value="Yme1-like_N"/>
</dbReference>
<dbReference type="NCBIfam" id="TIGR01241">
    <property type="entry name" value="FtsH_fam"/>
    <property type="match status" value="1"/>
</dbReference>
<dbReference type="PANTHER" id="PTHR23076:SF97">
    <property type="entry name" value="ATP-DEPENDENT ZINC METALLOPROTEASE YME1L1"/>
    <property type="match status" value="1"/>
</dbReference>
<dbReference type="PANTHER" id="PTHR23076">
    <property type="entry name" value="METALLOPROTEASE M41 FTSH"/>
    <property type="match status" value="1"/>
</dbReference>
<dbReference type="Pfam" id="PF00004">
    <property type="entry name" value="AAA"/>
    <property type="match status" value="1"/>
</dbReference>
<dbReference type="Pfam" id="PF17862">
    <property type="entry name" value="AAA_lid_3"/>
    <property type="match status" value="1"/>
</dbReference>
<dbReference type="Pfam" id="PF01434">
    <property type="entry name" value="Peptidase_M41"/>
    <property type="match status" value="1"/>
</dbReference>
<dbReference type="Pfam" id="PF21232">
    <property type="entry name" value="Yme1-like_N"/>
    <property type="match status" value="1"/>
</dbReference>
<dbReference type="SMART" id="SM00382">
    <property type="entry name" value="AAA"/>
    <property type="match status" value="1"/>
</dbReference>
<dbReference type="SUPFAM" id="SSF140990">
    <property type="entry name" value="FtsH protease domain-like"/>
    <property type="match status" value="1"/>
</dbReference>
<dbReference type="SUPFAM" id="SSF52540">
    <property type="entry name" value="P-loop containing nucleoside triphosphate hydrolases"/>
    <property type="match status" value="1"/>
</dbReference>
<dbReference type="PROSITE" id="PS00674">
    <property type="entry name" value="AAA"/>
    <property type="match status" value="1"/>
</dbReference>
<name>YME1_YEAST</name>
<comment type="function">
    <text evidence="6 7 9">Catalytic subunit of the mitochondrial inner membrane i-AAA protease supercomplex required for mitochondrial inner membrane protein turnover. The protease is probably ATP-dependent. Important to maintain the integrity of the mitochondrial compartment. Required both for the degradation of unassembled subunit 2 of cytochrome c oxidase (COX2) and for efficient assembly of mitochondrial respiratory chain. Binds unfolded substrates in an ATPase-independent manner; binding of folded COX2, a physiological substrate, requires an active ATPase but when COX2 is destabilized an active ATPase is no longer necessary (PubMed:16267274, PubMed:16527490). May process ATG32 (PubMed:38964378).</text>
</comment>
<comment type="cofactor">
    <cofactor evidence="1">
        <name>Zn(2+)</name>
        <dbReference type="ChEBI" id="CHEBI:29105"/>
    </cofactor>
    <text evidence="1">Binds 1 zinc ion per subunit.</text>
</comment>
<comment type="subunit">
    <text evidence="6 8">Component of the mitochondrial inner membrane i-AAA protease supercomplex composed of MGR1, MGR3 and YME1. Interacts directly with MGR1.</text>
</comment>
<comment type="interaction">
    <interactant intactId="EBI-27785">
        <id>P32795</id>
    </interactant>
    <interactant intactId="EBI-21740">
        <id>P25573</id>
        <label>MGR1</label>
    </interactant>
    <organismsDiffer>false</organismsDiffer>
    <experiments>4</experiments>
</comment>
<comment type="subcellular location">
    <subcellularLocation>
        <location evidence="4 10 11">Mitochondrion inner membrane</location>
        <topology evidence="4 10 11">Peripheral membrane protein</topology>
        <orientation evidence="4 10 11">Matrix side</orientation>
    </subcellularLocation>
    <text>Although this protein does not have any predicted transmembrane helices it behaves like an integral membrane protein.</text>
</comment>
<comment type="disruption phenotype">
    <text evidence="9 10">An increased rate of escape of mtDNA to the nucleus, no growth on nonfermentable carbon sources at 37 degrees Celsius, a cold-sensitive defect in growth on fermentable carbon sources, lethality in rho- (cytoplasmic petite) cells (PubMed:8355690). Decreases processing of ATG32 (PubMed:38964378).</text>
</comment>
<comment type="miscellaneous">
    <text evidence="5">Present with 20100 molecules/cell in log phase SD medium.</text>
</comment>
<comment type="similarity">
    <text evidence="12">In the N-terminal section; belongs to the AAA ATPase family.</text>
</comment>
<comment type="similarity">
    <text evidence="12">In the C-terminal section; belongs to the peptidase M41 family.</text>
</comment>
<feature type="chain" id="PRO_0000084664" description="Mitochondrial inner membrane i-AAA protease supercomplex subunit YME1">
    <location>
        <begin position="1"/>
        <end position="747"/>
    </location>
</feature>
<feature type="region of interest" description="Disordered" evidence="3">
    <location>
        <begin position="51"/>
        <end position="92"/>
    </location>
</feature>
<feature type="region of interest" description="Disordered" evidence="3">
    <location>
        <begin position="718"/>
        <end position="747"/>
    </location>
</feature>
<feature type="compositionally biased region" description="Basic and acidic residues" evidence="3">
    <location>
        <begin position="51"/>
        <end position="64"/>
    </location>
</feature>
<feature type="compositionally biased region" description="Polar residues" evidence="3">
    <location>
        <begin position="66"/>
        <end position="80"/>
    </location>
</feature>
<feature type="compositionally biased region" description="Basic and acidic residues" evidence="3">
    <location>
        <begin position="728"/>
        <end position="740"/>
    </location>
</feature>
<feature type="active site" evidence="1">
    <location>
        <position position="541"/>
    </location>
</feature>
<feature type="binding site" evidence="2">
    <location>
        <begin position="321"/>
        <end position="328"/>
    </location>
    <ligand>
        <name>ATP</name>
        <dbReference type="ChEBI" id="CHEBI:30616"/>
    </ligand>
</feature>
<feature type="binding site" evidence="1">
    <location>
        <position position="540"/>
    </location>
    <ligand>
        <name>Zn(2+)</name>
        <dbReference type="ChEBI" id="CHEBI:29105"/>
        <note>catalytic</note>
    </ligand>
</feature>
<feature type="binding site" evidence="1">
    <location>
        <position position="544"/>
    </location>
    <ligand>
        <name>Zn(2+)</name>
        <dbReference type="ChEBI" id="CHEBI:29105"/>
        <note>catalytic</note>
    </ligand>
</feature>
<feature type="binding site" evidence="1">
    <location>
        <position position="618"/>
    </location>
    <ligand>
        <name>Zn(2+)</name>
        <dbReference type="ChEBI" id="CHEBI:29105"/>
        <note>catalytic</note>
    </ligand>
</feature>
<feature type="mutagenesis site" description="Does not complement a YME1 deletion mutant, for K327R no longer binds or degrades COX2. Probably has no ATPase activity." evidence="7 11">
    <original>K</original>
    <variation>I</variation>
    <variation>R</variation>
    <variation>T</variation>
    <location>
        <position position="327"/>
    </location>
</feature>
<feature type="mutagenesis site" description="Partially complements a YME1 deletion mutant." evidence="7">
    <original>Y</original>
    <variation>A</variation>
    <variation>C</variation>
    <variation>I</variation>
    <variation>L</variation>
    <variation>V</variation>
    <location>
        <position position="354"/>
    </location>
</feature>
<feature type="mutagenesis site" description="Complements a YME1 deletion mutant." evidence="7">
    <original>Y</original>
    <variation>F</variation>
    <variation>W</variation>
    <location>
        <position position="354"/>
    </location>
</feature>
<feature type="mutagenesis site" description="Does not complement a YME1 deletion mutant." evidence="7">
    <original>Y</original>
    <variation>K</variation>
    <variation>N</variation>
    <variation>R</variation>
    <variation>T</variation>
    <location>
        <position position="354"/>
    </location>
</feature>
<feature type="mutagenesis site" description="Does not complement a YME1 deletion mutant, retains 20% protease activity in vitro, binds an unfolded hybrid substrate protein." evidence="7">
    <original>Y</original>
    <variation>S</variation>
    <location>
        <position position="354"/>
    </location>
</feature>
<feature type="mutagenesis site" description="Does not complement a YME1 deletion mutant, no longer binds or degrades COX2. Probably has no ATPase activity." evidence="7">
    <original>E</original>
    <variation>Q</variation>
    <location>
        <position position="381"/>
    </location>
</feature>
<feature type="mutagenesis site" description="Does not complement a YME1 deletion mutant, for E541A stabilizes otherwise unstable COX2." evidence="11">
    <original>E</original>
    <variation>A</variation>
    <variation>G</variation>
    <variation>V</variation>
    <location>
        <position position="541"/>
    </location>
</feature>
<feature type="sequence conflict" description="In Ref. 2; CAA56954." evidence="12" ref="2">
    <original>N</original>
    <variation>T</variation>
    <location>
        <position position="52"/>
    </location>
</feature>
<feature type="sequence conflict" description="In Ref. 2; CAA56954." evidence="12" ref="2">
    <original>T</original>
    <variation>N</variation>
    <location>
        <position position="88"/>
    </location>
</feature>
<feature type="sequence conflict" description="In Ref. 3; BAA03839." evidence="12" ref="3">
    <original>T</original>
    <variation>A</variation>
    <location>
        <position position="584"/>
    </location>
</feature>
<feature type="helix" evidence="13">
    <location>
        <begin position="102"/>
        <end position="113"/>
    </location>
</feature>
<feature type="helix" evidence="13">
    <location>
        <begin position="118"/>
        <end position="130"/>
    </location>
</feature>
<feature type="helix" evidence="13">
    <location>
        <begin position="134"/>
        <end position="141"/>
    </location>
</feature>
<feature type="helix" evidence="13">
    <location>
        <begin position="150"/>
        <end position="162"/>
    </location>
</feature>
<feature type="helix" evidence="13">
    <location>
        <begin position="166"/>
        <end position="176"/>
    </location>
</feature>
<proteinExistence type="evidence at protein level"/>
<protein>
    <recommendedName>
        <fullName>Mitochondrial inner membrane i-AAA protease supercomplex subunit YME1</fullName>
        <ecNumber>3.4.24.-</ecNumber>
    </recommendedName>
    <alternativeName>
        <fullName>Protein OSD1</fullName>
    </alternativeName>
    <alternativeName>
        <fullName>Tat-binding homolog 11</fullName>
    </alternativeName>
    <alternativeName>
        <fullName>Yeast mitochondrial escape protein 1</fullName>
    </alternativeName>
</protein>
<accession>P32795</accession>
<accession>D6W434</accession>
<gene>
    <name type="primary">YME1</name>
    <name type="synonym">OSD1</name>
    <name type="synonym">YTA11</name>
    <name type="ordered locus">YPR024W</name>
    <name type="ORF">YP9367.04</name>
</gene>
<reference key="1">
    <citation type="journal article" date="1993" name="Mol. Cell. Biol.">
        <title>Inactivation of YME1, a member of the ftsH-SEC18-PAS1-CDC48 family of putative ATPase-encoding genes, causes increased escape of DNA from mitochondria in Saccharomyces cerevisiae.</title>
        <authorList>
            <person name="Thorsness P.E."/>
            <person name="White K.H."/>
            <person name="Fox T.D."/>
        </authorList>
    </citation>
    <scope>NUCLEOTIDE SEQUENCE [GENOMIC DNA]</scope>
    <scope>SUBCELLULAR LOCATION</scope>
    <scope>DISRUPTION PHENOTYPE</scope>
</reference>
<reference key="2">
    <citation type="journal article" date="1994" name="Yeast">
        <title>Identification of a set of yeast genes coding for a novel family of putative ATPases with high similarity to constituents of the 26S protease complex.</title>
        <authorList>
            <person name="Schnall R."/>
            <person name="Mannhaupt G."/>
            <person name="Stucka R."/>
            <person name="Tauer R."/>
            <person name="Ehnle S."/>
            <person name="Schwarzlose C."/>
            <person name="Vetter I."/>
            <person name="Feldmann H."/>
        </authorList>
    </citation>
    <scope>NUCLEOTIDE SEQUENCE [GENOMIC DNA]</scope>
    <source>
        <strain>ATCC 204508 / S288c</strain>
    </source>
</reference>
<reference key="3">
    <citation type="journal article" date="1995" name="Mol. Cell. Biol.">
        <title>Multiple genes, including a member of the AAA family, are essential for degradation of unassembled subunit 2 of cytochrome c oxidase in yeast mitochondria.</title>
        <authorList>
            <person name="Nakai T."/>
            <person name="Yasuhara T."/>
            <person name="Fujiki Y."/>
            <person name="Ohashi A."/>
        </authorList>
    </citation>
    <scope>NUCLEOTIDE SEQUENCE [GENOMIC DNA]</scope>
    <source>
        <strain>ATCC 24657 / D273-10B</strain>
    </source>
</reference>
<reference key="4">
    <citation type="journal article" date="1997" name="Nature">
        <title>The nucleotide sequence of Saccharomyces cerevisiae chromosome XVI.</title>
        <authorList>
            <person name="Bussey H."/>
            <person name="Storms R.K."/>
            <person name="Ahmed A."/>
            <person name="Albermann K."/>
            <person name="Allen E."/>
            <person name="Ansorge W."/>
            <person name="Araujo R."/>
            <person name="Aparicio A."/>
            <person name="Barrell B.G."/>
            <person name="Badcock K."/>
            <person name="Benes V."/>
            <person name="Botstein D."/>
            <person name="Bowman S."/>
            <person name="Brueckner M."/>
            <person name="Carpenter J."/>
            <person name="Cherry J.M."/>
            <person name="Chung E."/>
            <person name="Churcher C.M."/>
            <person name="Coster F."/>
            <person name="Davis K."/>
            <person name="Davis R.W."/>
            <person name="Dietrich F.S."/>
            <person name="Delius H."/>
            <person name="DiPaolo T."/>
            <person name="Dubois E."/>
            <person name="Duesterhoeft A."/>
            <person name="Duncan M."/>
            <person name="Floeth M."/>
            <person name="Fortin N."/>
            <person name="Friesen J.D."/>
            <person name="Fritz C."/>
            <person name="Goffeau A."/>
            <person name="Hall J."/>
            <person name="Hebling U."/>
            <person name="Heumann K."/>
            <person name="Hilbert H."/>
            <person name="Hillier L.W."/>
            <person name="Hunicke-Smith S."/>
            <person name="Hyman R.W."/>
            <person name="Johnston M."/>
            <person name="Kalman S."/>
            <person name="Kleine K."/>
            <person name="Komp C."/>
            <person name="Kurdi O."/>
            <person name="Lashkari D."/>
            <person name="Lew H."/>
            <person name="Lin A."/>
            <person name="Lin D."/>
            <person name="Louis E.J."/>
            <person name="Marathe R."/>
            <person name="Messenguy F."/>
            <person name="Mewes H.-W."/>
            <person name="Mirtipati S."/>
            <person name="Moestl D."/>
            <person name="Mueller-Auer S."/>
            <person name="Namath A."/>
            <person name="Nentwich U."/>
            <person name="Oefner P."/>
            <person name="Pearson D."/>
            <person name="Petel F.X."/>
            <person name="Pohl T.M."/>
            <person name="Purnelle B."/>
            <person name="Rajandream M.A."/>
            <person name="Rechmann S."/>
            <person name="Rieger M."/>
            <person name="Riles L."/>
            <person name="Roberts D."/>
            <person name="Schaefer M."/>
            <person name="Scharfe M."/>
            <person name="Scherens B."/>
            <person name="Schramm S."/>
            <person name="Schroeder M."/>
            <person name="Sdicu A.-M."/>
            <person name="Tettelin H."/>
            <person name="Urrestarazu L.A."/>
            <person name="Ushinsky S."/>
            <person name="Vierendeels F."/>
            <person name="Vissers S."/>
            <person name="Voss H."/>
            <person name="Walsh S.V."/>
            <person name="Wambutt R."/>
            <person name="Wang Y."/>
            <person name="Wedler E."/>
            <person name="Wedler H."/>
            <person name="Winnett E."/>
            <person name="Zhong W.-W."/>
            <person name="Zollner A."/>
            <person name="Vo D.H."/>
            <person name="Hani J."/>
        </authorList>
    </citation>
    <scope>NUCLEOTIDE SEQUENCE [LARGE SCALE GENOMIC DNA]</scope>
    <source>
        <strain>ATCC 204508 / S288c</strain>
    </source>
</reference>
<reference key="5">
    <citation type="journal article" date="2014" name="G3 (Bethesda)">
        <title>The reference genome sequence of Saccharomyces cerevisiae: Then and now.</title>
        <authorList>
            <person name="Engel S.R."/>
            <person name="Dietrich F.S."/>
            <person name="Fisk D.G."/>
            <person name="Binkley G."/>
            <person name="Balakrishnan R."/>
            <person name="Costanzo M.C."/>
            <person name="Dwight S.S."/>
            <person name="Hitz B.C."/>
            <person name="Karra K."/>
            <person name="Nash R.S."/>
            <person name="Weng S."/>
            <person name="Wong E.D."/>
            <person name="Lloyd P."/>
            <person name="Skrzypek M.S."/>
            <person name="Miyasato S.R."/>
            <person name="Simison M."/>
            <person name="Cherry J.M."/>
        </authorList>
    </citation>
    <scope>GENOME REANNOTATION</scope>
    <source>
        <strain>ATCC 204508 / S288c</strain>
    </source>
</reference>
<reference key="6">
    <citation type="journal article" date="1996" name="Mol. Biol. Cell">
        <title>Biochemical and functional analysis of the YME1 gene product, an ATP and zinc-dependent mitochondrial protease from S. cerevisiae.</title>
        <authorList>
            <person name="Weber E.R."/>
            <person name="Hanekamp T."/>
            <person name="Thorsness P.E."/>
        </authorList>
    </citation>
    <scope>SUBCELLULAR LOCATION</scope>
    <scope>MUTAGENESIS OF LYS-327 AND GLU-541</scope>
</reference>
<reference key="7">
    <citation type="journal article" date="2003" name="Nature">
        <title>Global analysis of protein localization in budding yeast.</title>
        <authorList>
            <person name="Huh W.-K."/>
            <person name="Falvo J.V."/>
            <person name="Gerke L.C."/>
            <person name="Carroll A.S."/>
            <person name="Howson R.W."/>
            <person name="Weissman J.S."/>
            <person name="O'Shea E.K."/>
        </authorList>
    </citation>
    <scope>SUBCELLULAR LOCATION [LARGE SCALE ANALYSIS]</scope>
</reference>
<reference key="8">
    <citation type="journal article" date="2003" name="Nature">
        <title>Global analysis of protein expression in yeast.</title>
        <authorList>
            <person name="Ghaemmaghami S."/>
            <person name="Huh W.-K."/>
            <person name="Bower K."/>
            <person name="Howson R.W."/>
            <person name="Belle A."/>
            <person name="Dephoure N."/>
            <person name="O'Shea E.K."/>
            <person name="Weissman J.S."/>
        </authorList>
    </citation>
    <scope>LEVEL OF PROTEIN EXPRESSION [LARGE SCALE ANALYSIS]</scope>
</reference>
<reference key="9">
    <citation type="journal article" date="2006" name="J. Struct. Biol.">
        <title>Substrate specific consequences of central pore mutations in the i-AAA protease Yme1 on substrate engagement.</title>
        <authorList>
            <person name="Graef M."/>
            <person name="Langer T."/>
        </authorList>
    </citation>
    <scope>PROTEASE ACTIVITY</scope>
    <scope>FUNCTION</scope>
    <scope>SUBSTRATE-BINDING</scope>
    <scope>MUTAGENESIS OF LYS-327; TYR-354 AND GLU-381</scope>
</reference>
<reference key="10">
    <citation type="journal article" date="2006" name="Mol. Biol. Cell">
        <title>A genomewide screen for petite-negative yeast strains yields a new subunit of the i-AAA protease complex.</title>
        <authorList>
            <person name="Dunn C.D."/>
            <person name="Lee M.S."/>
            <person name="Spencer F.A."/>
            <person name="Jensen R.E."/>
        </authorList>
    </citation>
    <scope>FUNCTION</scope>
    <scope>INTERACTION WITH MGR1</scope>
    <scope>IDENTIFICATION IN THE I-AAA COMPLEX</scope>
</reference>
<reference key="11">
    <citation type="journal article" date="2008" name="Mol. Biol. Cell">
        <title>Mgr3p and Mgr1p are adaptors for the mitochondrial i-AAA protease complex.</title>
        <authorList>
            <person name="Dunn C.D."/>
            <person name="Tamura Y."/>
            <person name="Sesaki H."/>
            <person name="Jensen R.E."/>
        </authorList>
    </citation>
    <scope>SUBUNIT</scope>
</reference>
<reference key="12">
    <citation type="journal article" date="2024" name="Autophagy">
        <title>Prohibitins, Phb1 and Phb2, function as Atg8 receptors to support yeast mitophagy and also play a negative regulatory role in Atg32 processing.</title>
        <authorList>
            <person name="Garcia-Chavez D."/>
            <person name="Dominguez-Martin E."/>
            <person name="Kawasaki L."/>
            <person name="Ongay-Larios L."/>
            <person name="Ruelas-Ramirez H."/>
            <person name="Mendoza-Martinez A.E."/>
            <person name="Pardo J.P."/>
            <person name="Funes S."/>
            <person name="Coria R."/>
        </authorList>
    </citation>
    <scope>FUNCTION</scope>
    <scope>DISRUPTION PHENOTYPE</scope>
</reference>
<evidence type="ECO:0000250" key="1"/>
<evidence type="ECO:0000255" key="2"/>
<evidence type="ECO:0000256" key="3">
    <source>
        <dbReference type="SAM" id="MobiDB-lite"/>
    </source>
</evidence>
<evidence type="ECO:0000269" key="4">
    <source>
    </source>
</evidence>
<evidence type="ECO:0000269" key="5">
    <source>
    </source>
</evidence>
<evidence type="ECO:0000269" key="6">
    <source>
    </source>
</evidence>
<evidence type="ECO:0000269" key="7">
    <source>
    </source>
</evidence>
<evidence type="ECO:0000269" key="8">
    <source>
    </source>
</evidence>
<evidence type="ECO:0000269" key="9">
    <source>
    </source>
</evidence>
<evidence type="ECO:0000269" key="10">
    <source>
    </source>
</evidence>
<evidence type="ECO:0000269" key="11">
    <source>
    </source>
</evidence>
<evidence type="ECO:0000305" key="12"/>
<evidence type="ECO:0007829" key="13">
    <source>
        <dbReference type="PDB" id="2MV3"/>
    </source>
</evidence>